<evidence type="ECO:0000255" key="1">
    <source>
        <dbReference type="HAMAP-Rule" id="MF_00693"/>
    </source>
</evidence>
<gene>
    <name type="ordered locus">MAP_1030</name>
</gene>
<proteinExistence type="inferred from homology"/>
<dbReference type="EMBL" id="AE016958">
    <property type="protein sequence ID" value="AAS03347.1"/>
    <property type="molecule type" value="Genomic_DNA"/>
</dbReference>
<dbReference type="RefSeq" id="WP_003877570.1">
    <property type="nucleotide sequence ID" value="NZ_CP106873.1"/>
</dbReference>
<dbReference type="SMR" id="P62039"/>
<dbReference type="STRING" id="262316.MAP_1030"/>
<dbReference type="KEGG" id="mpa:MAP_1030"/>
<dbReference type="PATRIC" id="fig|262316.17.peg.1082"/>
<dbReference type="eggNOG" id="COG0217">
    <property type="taxonomic scope" value="Bacteria"/>
</dbReference>
<dbReference type="HOGENOM" id="CLU_062974_2_2_11"/>
<dbReference type="Proteomes" id="UP000000580">
    <property type="component" value="Chromosome"/>
</dbReference>
<dbReference type="GO" id="GO:0005829">
    <property type="term" value="C:cytosol"/>
    <property type="evidence" value="ECO:0007669"/>
    <property type="project" value="TreeGrafter"/>
</dbReference>
<dbReference type="GO" id="GO:0003677">
    <property type="term" value="F:DNA binding"/>
    <property type="evidence" value="ECO:0007669"/>
    <property type="project" value="UniProtKB-UniRule"/>
</dbReference>
<dbReference type="GO" id="GO:0006355">
    <property type="term" value="P:regulation of DNA-templated transcription"/>
    <property type="evidence" value="ECO:0007669"/>
    <property type="project" value="UniProtKB-UniRule"/>
</dbReference>
<dbReference type="FunFam" id="1.10.10.200:FF:000002">
    <property type="entry name" value="Probable transcriptional regulatory protein CLM62_37755"/>
    <property type="match status" value="1"/>
</dbReference>
<dbReference type="FunFam" id="3.30.70.980:FF:000006">
    <property type="entry name" value="Probable transcriptional regulatory protein J113_18170"/>
    <property type="match status" value="1"/>
</dbReference>
<dbReference type="Gene3D" id="1.10.10.200">
    <property type="match status" value="1"/>
</dbReference>
<dbReference type="Gene3D" id="3.30.70.980">
    <property type="match status" value="2"/>
</dbReference>
<dbReference type="HAMAP" id="MF_00693">
    <property type="entry name" value="Transcrip_reg_TACO1"/>
    <property type="match status" value="1"/>
</dbReference>
<dbReference type="InterPro" id="IPR017856">
    <property type="entry name" value="Integrase-like_N"/>
</dbReference>
<dbReference type="InterPro" id="IPR048300">
    <property type="entry name" value="TACO1_YebC-like_2nd/3rd_dom"/>
</dbReference>
<dbReference type="InterPro" id="IPR049083">
    <property type="entry name" value="TACO1_YebC_N"/>
</dbReference>
<dbReference type="InterPro" id="IPR002876">
    <property type="entry name" value="Transcrip_reg_TACO1-like"/>
</dbReference>
<dbReference type="InterPro" id="IPR026564">
    <property type="entry name" value="Transcrip_reg_TACO1-like_dom3"/>
</dbReference>
<dbReference type="InterPro" id="IPR029072">
    <property type="entry name" value="YebC-like"/>
</dbReference>
<dbReference type="NCBIfam" id="NF001030">
    <property type="entry name" value="PRK00110.1"/>
    <property type="match status" value="1"/>
</dbReference>
<dbReference type="NCBIfam" id="NF009044">
    <property type="entry name" value="PRK12378.1"/>
    <property type="match status" value="1"/>
</dbReference>
<dbReference type="NCBIfam" id="TIGR01033">
    <property type="entry name" value="YebC/PmpR family DNA-binding transcriptional regulator"/>
    <property type="match status" value="1"/>
</dbReference>
<dbReference type="PANTHER" id="PTHR12532:SF6">
    <property type="entry name" value="TRANSCRIPTIONAL REGULATORY PROTEIN YEBC-RELATED"/>
    <property type="match status" value="1"/>
</dbReference>
<dbReference type="PANTHER" id="PTHR12532">
    <property type="entry name" value="TRANSLATIONAL ACTIVATOR OF CYTOCHROME C OXIDASE 1"/>
    <property type="match status" value="1"/>
</dbReference>
<dbReference type="Pfam" id="PF20772">
    <property type="entry name" value="TACO1_YebC_N"/>
    <property type="match status" value="1"/>
</dbReference>
<dbReference type="Pfam" id="PF01709">
    <property type="entry name" value="Transcrip_reg"/>
    <property type="match status" value="1"/>
</dbReference>
<dbReference type="SUPFAM" id="SSF75625">
    <property type="entry name" value="YebC-like"/>
    <property type="match status" value="1"/>
</dbReference>
<sequence length="250" mass="26784">MSGHSKWATTKHKKAVIDARRGKMFARLIKNIEVAARVGGGDPAGNPTLYDAIQKAKKSSVPNENIERARKRGAGEEAGGADWQTITYEGYAPNGVAVLIECLTDNRNRAASEVRVAMTRNGGTMADPGSVSYLFSRKSVVTCEKNGLTEDDILAAVLDAGAEEVEDLGDSFEIICEPTDLVAVRTALQDAGIDYDSAEAGFQPSVTVPLNADGAQKVMRLVDALEDSDDVQDVWTNADIPDEILAQIEE</sequence>
<keyword id="KW-0963">Cytoplasm</keyword>
<keyword id="KW-0238">DNA-binding</keyword>
<keyword id="KW-1185">Reference proteome</keyword>
<keyword id="KW-0804">Transcription</keyword>
<keyword id="KW-0805">Transcription regulation</keyword>
<organism>
    <name type="scientific">Mycolicibacterium paratuberculosis (strain ATCC BAA-968 / K-10)</name>
    <name type="common">Mycobacterium paratuberculosis</name>
    <dbReference type="NCBI Taxonomy" id="262316"/>
    <lineage>
        <taxon>Bacteria</taxon>
        <taxon>Bacillati</taxon>
        <taxon>Actinomycetota</taxon>
        <taxon>Actinomycetes</taxon>
        <taxon>Mycobacteriales</taxon>
        <taxon>Mycobacteriaceae</taxon>
        <taxon>Mycobacterium</taxon>
        <taxon>Mycobacterium avium complex (MAC)</taxon>
    </lineage>
</organism>
<reference key="1">
    <citation type="journal article" date="2005" name="Proc. Natl. Acad. Sci. U.S.A.">
        <title>The complete genome sequence of Mycobacterium avium subspecies paratuberculosis.</title>
        <authorList>
            <person name="Li L."/>
            <person name="Bannantine J.P."/>
            <person name="Zhang Q."/>
            <person name="Amonsin A."/>
            <person name="May B.J."/>
            <person name="Alt D."/>
            <person name="Banerji N."/>
            <person name="Kanjilal S."/>
            <person name="Kapur V."/>
        </authorList>
    </citation>
    <scope>NUCLEOTIDE SEQUENCE [LARGE SCALE GENOMIC DNA]</scope>
    <source>
        <strain>ATCC BAA-968 / K-10</strain>
    </source>
</reference>
<comment type="subcellular location">
    <subcellularLocation>
        <location evidence="1">Cytoplasm</location>
    </subcellularLocation>
</comment>
<comment type="similarity">
    <text evidence="1">Belongs to the TACO1 family.</text>
</comment>
<feature type="chain" id="PRO_0000175849" description="Probable transcriptional regulatory protein MAP_1030">
    <location>
        <begin position="1"/>
        <end position="250"/>
    </location>
</feature>
<accession>P62039</accession>
<name>Y1030_MYCPA</name>
<protein>
    <recommendedName>
        <fullName evidence="1">Probable transcriptional regulatory protein MAP_1030</fullName>
    </recommendedName>
</protein>